<proteinExistence type="inferred from homology"/>
<keyword id="KW-0028">Amino-acid biosynthesis</keyword>
<keyword id="KW-0057">Aromatic amino acid biosynthesis</keyword>
<keyword id="KW-0456">Lyase</keyword>
<keyword id="KW-1185">Reference proteome</keyword>
<name>AROQ1_COREF</name>
<sequence>MTGRILLLNGPNLNMLGLREPEIYGHATLDDVVELVRARAEHHGLEVDAVQSNHEGDLIDALHRARGTHLGCVLNPGGLTHTSVSLLDAVKASELPTVEVHISNPHARESFRHHSYISPVAAAVIAGAGVDGYGFAVDILANNHLQRTASQ</sequence>
<reference key="1">
    <citation type="journal article" date="2003" name="Genome Res.">
        <title>Comparative complete genome sequence analysis of the amino acid replacements responsible for the thermostability of Corynebacterium efficiens.</title>
        <authorList>
            <person name="Nishio Y."/>
            <person name="Nakamura Y."/>
            <person name="Kawarabayasi Y."/>
            <person name="Usuda Y."/>
            <person name="Kimura E."/>
            <person name="Sugimoto S."/>
            <person name="Matsui K."/>
            <person name="Yamagishi A."/>
            <person name="Kikuchi H."/>
            <person name="Ikeo K."/>
            <person name="Gojobori T."/>
        </authorList>
    </citation>
    <scope>NUCLEOTIDE SEQUENCE [LARGE SCALE GENOMIC DNA]</scope>
    <source>
        <strain>DSM 44549 / YS-314 / AJ 12310 / JCM 11189 / NBRC 100395</strain>
    </source>
</reference>
<protein>
    <recommendedName>
        <fullName>3-dehydroquinate dehydratase 1</fullName>
        <shortName>3-dehydroquinase 1</shortName>
        <ecNumber>4.2.1.10</ecNumber>
    </recommendedName>
    <alternativeName>
        <fullName>Type II DHQase 1</fullName>
    </alternativeName>
</protein>
<comment type="function">
    <text evidence="1">Catalyzes a trans-dehydration via an enolate intermediate.</text>
</comment>
<comment type="catalytic activity">
    <reaction>
        <text>3-dehydroquinate = 3-dehydroshikimate + H2O</text>
        <dbReference type="Rhea" id="RHEA:21096"/>
        <dbReference type="ChEBI" id="CHEBI:15377"/>
        <dbReference type="ChEBI" id="CHEBI:16630"/>
        <dbReference type="ChEBI" id="CHEBI:32364"/>
        <dbReference type="EC" id="4.2.1.10"/>
    </reaction>
</comment>
<comment type="pathway">
    <text>Metabolic intermediate biosynthesis; chorismate biosynthesis; chorismate from D-erythrose 4-phosphate and phosphoenolpyruvate: step 3/7.</text>
</comment>
<comment type="subunit">
    <text evidence="1">Homododecamer.</text>
</comment>
<comment type="similarity">
    <text evidence="2">Belongs to the type-II 3-dehydroquinase family.</text>
</comment>
<comment type="sequence caution" evidence="2">
    <conflict type="erroneous initiation">
        <sequence resource="EMBL-CDS" id="BAC17252"/>
    </conflict>
</comment>
<accession>Q8FSF1</accession>
<evidence type="ECO:0000250" key="1"/>
<evidence type="ECO:0000305" key="2"/>
<organism>
    <name type="scientific">Corynebacterium efficiens (strain DSM 44549 / YS-314 / AJ 12310 / JCM 11189 / NBRC 100395)</name>
    <dbReference type="NCBI Taxonomy" id="196164"/>
    <lineage>
        <taxon>Bacteria</taxon>
        <taxon>Bacillati</taxon>
        <taxon>Actinomycetota</taxon>
        <taxon>Actinomycetes</taxon>
        <taxon>Mycobacteriales</taxon>
        <taxon>Corynebacteriaceae</taxon>
        <taxon>Corynebacterium</taxon>
    </lineage>
</organism>
<feature type="chain" id="PRO_0000159894" description="3-dehydroquinate dehydratase 1">
    <location>
        <begin position="1"/>
        <end position="151"/>
    </location>
</feature>
<feature type="active site" description="Proton acceptor" evidence="1">
    <location>
        <position position="24"/>
    </location>
</feature>
<feature type="active site" description="Proton donor" evidence="1">
    <location>
        <position position="101"/>
    </location>
</feature>
<feature type="binding site" evidence="1">
    <location>
        <position position="75"/>
    </location>
    <ligand>
        <name>substrate</name>
    </ligand>
</feature>
<feature type="binding site" evidence="1">
    <location>
        <position position="81"/>
    </location>
    <ligand>
        <name>substrate</name>
    </ligand>
</feature>
<feature type="binding site" evidence="1">
    <location>
        <position position="88"/>
    </location>
    <ligand>
        <name>substrate</name>
    </ligand>
</feature>
<feature type="binding site" evidence="1">
    <location>
        <begin position="102"/>
        <end position="103"/>
    </location>
    <ligand>
        <name>substrate</name>
    </ligand>
</feature>
<feature type="binding site" evidence="1">
    <location>
        <position position="112"/>
    </location>
    <ligand>
        <name>substrate</name>
    </ligand>
</feature>
<feature type="site" description="Transition state stabilizer" evidence="1">
    <location>
        <position position="19"/>
    </location>
</feature>
<dbReference type="EC" id="4.2.1.10"/>
<dbReference type="EMBL" id="BA000035">
    <property type="protein sequence ID" value="BAC17252.1"/>
    <property type="status" value="ALT_INIT"/>
    <property type="molecule type" value="Genomic_DNA"/>
</dbReference>
<dbReference type="RefSeq" id="WP_035110031.1">
    <property type="nucleotide sequence ID" value="NC_004369.1"/>
</dbReference>
<dbReference type="SMR" id="Q8FSF1"/>
<dbReference type="STRING" id="196164.gene:10740840"/>
<dbReference type="KEGG" id="cef:CE0442"/>
<dbReference type="eggNOG" id="COG0757">
    <property type="taxonomic scope" value="Bacteria"/>
</dbReference>
<dbReference type="HOGENOM" id="CLU_090968_1_0_11"/>
<dbReference type="OrthoDB" id="9790793at2"/>
<dbReference type="UniPathway" id="UPA00053">
    <property type="reaction ID" value="UER00086"/>
</dbReference>
<dbReference type="Proteomes" id="UP000001409">
    <property type="component" value="Chromosome"/>
</dbReference>
<dbReference type="GO" id="GO:0003855">
    <property type="term" value="F:3-dehydroquinate dehydratase activity"/>
    <property type="evidence" value="ECO:0007669"/>
    <property type="project" value="UniProtKB-UniRule"/>
</dbReference>
<dbReference type="GO" id="GO:0008652">
    <property type="term" value="P:amino acid biosynthetic process"/>
    <property type="evidence" value="ECO:0007669"/>
    <property type="project" value="UniProtKB-KW"/>
</dbReference>
<dbReference type="GO" id="GO:0009073">
    <property type="term" value="P:aromatic amino acid family biosynthetic process"/>
    <property type="evidence" value="ECO:0007669"/>
    <property type="project" value="UniProtKB-KW"/>
</dbReference>
<dbReference type="GO" id="GO:0009423">
    <property type="term" value="P:chorismate biosynthetic process"/>
    <property type="evidence" value="ECO:0007669"/>
    <property type="project" value="UniProtKB-UniRule"/>
</dbReference>
<dbReference type="GO" id="GO:0019631">
    <property type="term" value="P:quinate catabolic process"/>
    <property type="evidence" value="ECO:0007669"/>
    <property type="project" value="TreeGrafter"/>
</dbReference>
<dbReference type="CDD" id="cd00466">
    <property type="entry name" value="DHQase_II"/>
    <property type="match status" value="1"/>
</dbReference>
<dbReference type="Gene3D" id="3.40.50.9100">
    <property type="entry name" value="Dehydroquinase, class II"/>
    <property type="match status" value="1"/>
</dbReference>
<dbReference type="HAMAP" id="MF_00169">
    <property type="entry name" value="AroQ"/>
    <property type="match status" value="1"/>
</dbReference>
<dbReference type="InterPro" id="IPR001874">
    <property type="entry name" value="DHquinase_II"/>
</dbReference>
<dbReference type="InterPro" id="IPR018509">
    <property type="entry name" value="DHquinase_II_CS"/>
</dbReference>
<dbReference type="InterPro" id="IPR036441">
    <property type="entry name" value="DHquinase_II_sf"/>
</dbReference>
<dbReference type="NCBIfam" id="TIGR01088">
    <property type="entry name" value="aroQ"/>
    <property type="match status" value="1"/>
</dbReference>
<dbReference type="NCBIfam" id="NF003805">
    <property type="entry name" value="PRK05395.1-2"/>
    <property type="match status" value="1"/>
</dbReference>
<dbReference type="NCBIfam" id="NF003806">
    <property type="entry name" value="PRK05395.1-3"/>
    <property type="match status" value="1"/>
</dbReference>
<dbReference type="NCBIfam" id="NF003807">
    <property type="entry name" value="PRK05395.1-4"/>
    <property type="match status" value="1"/>
</dbReference>
<dbReference type="PANTHER" id="PTHR21272">
    <property type="entry name" value="CATABOLIC 3-DEHYDROQUINASE"/>
    <property type="match status" value="1"/>
</dbReference>
<dbReference type="PANTHER" id="PTHR21272:SF3">
    <property type="entry name" value="CATABOLIC 3-DEHYDROQUINASE"/>
    <property type="match status" value="1"/>
</dbReference>
<dbReference type="Pfam" id="PF01220">
    <property type="entry name" value="DHquinase_II"/>
    <property type="match status" value="1"/>
</dbReference>
<dbReference type="PIRSF" id="PIRSF001399">
    <property type="entry name" value="DHquinase_II"/>
    <property type="match status" value="1"/>
</dbReference>
<dbReference type="SUPFAM" id="SSF52304">
    <property type="entry name" value="Type II 3-dehydroquinate dehydratase"/>
    <property type="match status" value="1"/>
</dbReference>
<dbReference type="PROSITE" id="PS01029">
    <property type="entry name" value="DEHYDROQUINASE_II"/>
    <property type="match status" value="1"/>
</dbReference>
<gene>
    <name type="primary">aroQ1</name>
    <name type="ordered locus">CE0442</name>
</gene>